<keyword id="KW-0963">Cytoplasm</keyword>
<keyword id="KW-0350">Heme biosynthesis</keyword>
<keyword id="KW-0408">Iron</keyword>
<keyword id="KW-0456">Lyase</keyword>
<keyword id="KW-0479">Metal-binding</keyword>
<keyword id="KW-0627">Porphyrin biosynthesis</keyword>
<sequence length="367" mass="40518">MSFDSVPRHALSMRFDLEPPSHASAAHRVAVLLVNLGTPDAPTPRAVRRYLAQFLSDPRVVEIPQLVWQVILCTLILPLRGRASAKKYAAVWLPEGSPLRVYTERQVESVKPLFAANGYRVIVDYAMRYGTPSIADVLAQLKRAGAERVLLLPMYPQYSSSTTATAFDAAFAALGRMRNQPEVRTVRHYADHPAYIHALAEQVRQYWAAHGRPAFDAGDKLVLSFHGVPKRTLDLGDPYHDQCQQTAALLMSALGLTTFECRVTFQSRFGKAEWLQPYTAPTLKELGAAGVRRADVFCPGFTADCLETIEEIGIEVRDEFVHGGGKEFHRIPCLNASPAWIAALGEIAAENLQGWPVRVAMAPEAVS</sequence>
<evidence type="ECO:0000255" key="1">
    <source>
        <dbReference type="HAMAP-Rule" id="MF_00323"/>
    </source>
</evidence>
<organism>
    <name type="scientific">Burkholderia mallei (strain NCTC 10247)</name>
    <dbReference type="NCBI Taxonomy" id="320389"/>
    <lineage>
        <taxon>Bacteria</taxon>
        <taxon>Pseudomonadati</taxon>
        <taxon>Pseudomonadota</taxon>
        <taxon>Betaproteobacteria</taxon>
        <taxon>Burkholderiales</taxon>
        <taxon>Burkholderiaceae</taxon>
        <taxon>Burkholderia</taxon>
        <taxon>pseudomallei group</taxon>
    </lineage>
</organism>
<name>HEMH_BURM7</name>
<comment type="function">
    <text evidence="1">Catalyzes the ferrous insertion into protoporphyrin IX.</text>
</comment>
<comment type="catalytic activity">
    <reaction evidence="1">
        <text>heme b + 2 H(+) = protoporphyrin IX + Fe(2+)</text>
        <dbReference type="Rhea" id="RHEA:22584"/>
        <dbReference type="ChEBI" id="CHEBI:15378"/>
        <dbReference type="ChEBI" id="CHEBI:29033"/>
        <dbReference type="ChEBI" id="CHEBI:57306"/>
        <dbReference type="ChEBI" id="CHEBI:60344"/>
        <dbReference type="EC" id="4.98.1.1"/>
    </reaction>
</comment>
<comment type="pathway">
    <text evidence="1">Porphyrin-containing compound metabolism; protoheme biosynthesis; protoheme from protoporphyrin-IX: step 1/1.</text>
</comment>
<comment type="subcellular location">
    <subcellularLocation>
        <location evidence="1">Cytoplasm</location>
    </subcellularLocation>
</comment>
<comment type="similarity">
    <text evidence="1">Belongs to the ferrochelatase family.</text>
</comment>
<proteinExistence type="inferred from homology"/>
<feature type="chain" id="PRO_1000019279" description="Ferrochelatase">
    <location>
        <begin position="1"/>
        <end position="367"/>
    </location>
</feature>
<feature type="binding site" evidence="1">
    <location>
        <position position="226"/>
    </location>
    <ligand>
        <name>Fe cation</name>
        <dbReference type="ChEBI" id="CHEBI:24875"/>
    </ligand>
</feature>
<feature type="binding site" evidence="1">
    <location>
        <position position="307"/>
    </location>
    <ligand>
        <name>Fe cation</name>
        <dbReference type="ChEBI" id="CHEBI:24875"/>
    </ligand>
</feature>
<gene>
    <name evidence="1" type="primary">hemH</name>
    <name type="ordered locus">BMA10247_2211</name>
</gene>
<reference key="1">
    <citation type="journal article" date="2010" name="Genome Biol. Evol.">
        <title>Continuing evolution of Burkholderia mallei through genome reduction and large-scale rearrangements.</title>
        <authorList>
            <person name="Losada L."/>
            <person name="Ronning C.M."/>
            <person name="DeShazer D."/>
            <person name="Woods D."/>
            <person name="Fedorova N."/>
            <person name="Kim H.S."/>
            <person name="Shabalina S.A."/>
            <person name="Pearson T.R."/>
            <person name="Brinkac L."/>
            <person name="Tan P."/>
            <person name="Nandi T."/>
            <person name="Crabtree J."/>
            <person name="Badger J."/>
            <person name="Beckstrom-Sternberg S."/>
            <person name="Saqib M."/>
            <person name="Schutzer S.E."/>
            <person name="Keim P."/>
            <person name="Nierman W.C."/>
        </authorList>
    </citation>
    <scope>NUCLEOTIDE SEQUENCE [LARGE SCALE GENOMIC DNA]</scope>
    <source>
        <strain>NCTC 10247</strain>
    </source>
</reference>
<accession>A3MNA4</accession>
<protein>
    <recommendedName>
        <fullName evidence="1">Ferrochelatase</fullName>
        <ecNumber evidence="1">4.98.1.1</ecNumber>
    </recommendedName>
    <alternativeName>
        <fullName evidence="1">Heme synthase</fullName>
    </alternativeName>
    <alternativeName>
        <fullName evidence="1">Protoheme ferro-lyase</fullName>
    </alternativeName>
</protein>
<dbReference type="EC" id="4.98.1.1" evidence="1"/>
<dbReference type="EMBL" id="CP000548">
    <property type="protein sequence ID" value="ABO03971.1"/>
    <property type="molecule type" value="Genomic_DNA"/>
</dbReference>
<dbReference type="SMR" id="A3MNA4"/>
<dbReference type="KEGG" id="bmn:BMA10247_2211"/>
<dbReference type="UniPathway" id="UPA00252">
    <property type="reaction ID" value="UER00325"/>
</dbReference>
<dbReference type="GO" id="GO:0005737">
    <property type="term" value="C:cytoplasm"/>
    <property type="evidence" value="ECO:0007669"/>
    <property type="project" value="UniProtKB-SubCell"/>
</dbReference>
<dbReference type="GO" id="GO:0004325">
    <property type="term" value="F:ferrochelatase activity"/>
    <property type="evidence" value="ECO:0007669"/>
    <property type="project" value="UniProtKB-UniRule"/>
</dbReference>
<dbReference type="GO" id="GO:0046872">
    <property type="term" value="F:metal ion binding"/>
    <property type="evidence" value="ECO:0007669"/>
    <property type="project" value="UniProtKB-KW"/>
</dbReference>
<dbReference type="GO" id="GO:0006783">
    <property type="term" value="P:heme biosynthetic process"/>
    <property type="evidence" value="ECO:0007669"/>
    <property type="project" value="UniProtKB-UniRule"/>
</dbReference>
<dbReference type="CDD" id="cd00419">
    <property type="entry name" value="Ferrochelatase_C"/>
    <property type="match status" value="1"/>
</dbReference>
<dbReference type="CDD" id="cd03411">
    <property type="entry name" value="Ferrochelatase_N"/>
    <property type="match status" value="1"/>
</dbReference>
<dbReference type="FunFam" id="3.40.50.1400:FF:000002">
    <property type="entry name" value="Ferrochelatase"/>
    <property type="match status" value="1"/>
</dbReference>
<dbReference type="Gene3D" id="3.40.50.1400">
    <property type="match status" value="2"/>
</dbReference>
<dbReference type="HAMAP" id="MF_00323">
    <property type="entry name" value="Ferrochelatase"/>
    <property type="match status" value="1"/>
</dbReference>
<dbReference type="InterPro" id="IPR001015">
    <property type="entry name" value="Ferrochelatase"/>
</dbReference>
<dbReference type="InterPro" id="IPR019772">
    <property type="entry name" value="Ferrochelatase_AS"/>
</dbReference>
<dbReference type="InterPro" id="IPR033644">
    <property type="entry name" value="Ferrochelatase_C"/>
</dbReference>
<dbReference type="InterPro" id="IPR033659">
    <property type="entry name" value="Ferrochelatase_N"/>
</dbReference>
<dbReference type="NCBIfam" id="TIGR00109">
    <property type="entry name" value="hemH"/>
    <property type="match status" value="1"/>
</dbReference>
<dbReference type="PANTHER" id="PTHR11108">
    <property type="entry name" value="FERROCHELATASE"/>
    <property type="match status" value="1"/>
</dbReference>
<dbReference type="PANTHER" id="PTHR11108:SF1">
    <property type="entry name" value="FERROCHELATASE, MITOCHONDRIAL"/>
    <property type="match status" value="1"/>
</dbReference>
<dbReference type="Pfam" id="PF00762">
    <property type="entry name" value="Ferrochelatase"/>
    <property type="match status" value="1"/>
</dbReference>
<dbReference type="SUPFAM" id="SSF53800">
    <property type="entry name" value="Chelatase"/>
    <property type="match status" value="1"/>
</dbReference>
<dbReference type="PROSITE" id="PS00534">
    <property type="entry name" value="FERROCHELATASE"/>
    <property type="match status" value="1"/>
</dbReference>